<geneLocation type="chloroplast"/>
<dbReference type="EMBL" id="DQ400350">
    <property type="protein sequence ID" value="ABD48506.1"/>
    <property type="molecule type" value="Genomic_DNA"/>
</dbReference>
<dbReference type="RefSeq" id="YP_001595519.1">
    <property type="nucleotide sequence ID" value="NC_010109.1"/>
</dbReference>
<dbReference type="GeneID" id="5787605"/>
<dbReference type="GO" id="GO:0009535">
    <property type="term" value="C:chloroplast thylakoid membrane"/>
    <property type="evidence" value="ECO:0007669"/>
    <property type="project" value="UniProtKB-SubCell"/>
</dbReference>
<dbReference type="GO" id="GO:0009522">
    <property type="term" value="C:photosystem I"/>
    <property type="evidence" value="ECO:0007669"/>
    <property type="project" value="InterPro"/>
</dbReference>
<dbReference type="GO" id="GO:0015979">
    <property type="term" value="P:photosynthesis"/>
    <property type="evidence" value="ECO:0007669"/>
    <property type="project" value="UniProtKB-UniRule"/>
</dbReference>
<dbReference type="HAMAP" id="MF_00437">
    <property type="entry name" value="Ycf4"/>
    <property type="match status" value="1"/>
</dbReference>
<dbReference type="InterPro" id="IPR003359">
    <property type="entry name" value="PSI_Ycf4_assembly"/>
</dbReference>
<dbReference type="NCBIfam" id="NF002712">
    <property type="entry name" value="PRK02542.1"/>
    <property type="match status" value="1"/>
</dbReference>
<dbReference type="PANTHER" id="PTHR33288">
    <property type="match status" value="1"/>
</dbReference>
<dbReference type="PANTHER" id="PTHR33288:SF4">
    <property type="entry name" value="PHOTOSYSTEM I ASSEMBLY PROTEIN YCF4"/>
    <property type="match status" value="1"/>
</dbReference>
<dbReference type="Pfam" id="PF02392">
    <property type="entry name" value="Ycf4"/>
    <property type="match status" value="1"/>
</dbReference>
<accession>A9L9A7</accession>
<sequence length="184" mass="21340">MNWRSEHIWIEFITGSRKTSNFFWACILFLGSLGFLVVGTSSYLGRNLISVFPSQQISFFPQGIVMSFYGIAGLFISSYLWSTILWNVGSGYDRFDRKEGIVCIFRWGFPGKNRRIVLRFLMSDVQSIRVEVKEGLYTRRVLYMEVRGQGTIPLTRTDENLTPREMEQKAAELAYFLRVPIEGF</sequence>
<comment type="function">
    <text evidence="1">Seems to be required for the assembly of the photosystem I complex.</text>
</comment>
<comment type="subcellular location">
    <subcellularLocation>
        <location evidence="1">Plastid</location>
        <location evidence="1">Chloroplast thylakoid membrane</location>
        <topology evidence="1">Multi-pass membrane protein</topology>
    </subcellularLocation>
</comment>
<comment type="similarity">
    <text evidence="1">Belongs to the Ycf4 family.</text>
</comment>
<keyword id="KW-0150">Chloroplast</keyword>
<keyword id="KW-0472">Membrane</keyword>
<keyword id="KW-0602">Photosynthesis</keyword>
<keyword id="KW-0934">Plastid</keyword>
<keyword id="KW-0793">Thylakoid</keyword>
<keyword id="KW-0812">Transmembrane</keyword>
<keyword id="KW-1133">Transmembrane helix</keyword>
<proteinExistence type="inferred from homology"/>
<protein>
    <recommendedName>
        <fullName evidence="1">Photosystem I assembly protein Ycf4</fullName>
    </recommendedName>
</protein>
<reference key="1">
    <citation type="journal article" date="2008" name="J. Mol. Evol.">
        <title>Complete sequence of the Duckweed (Lemna minor) chloroplast genome: structural organization and phylogenetic relationships to other angiosperms.</title>
        <authorList>
            <person name="Mardanov A.V."/>
            <person name="Ravin N.V."/>
            <person name="Kuznetsov B.B."/>
            <person name="Samigullin T.H."/>
            <person name="Antonov A.S."/>
            <person name="Kolganova T.V."/>
            <person name="Skyabin K.G."/>
        </authorList>
    </citation>
    <scope>NUCLEOTIDE SEQUENCE [LARGE SCALE GENOMIC DNA]</scope>
</reference>
<gene>
    <name evidence="1" type="primary">ycf4</name>
</gene>
<evidence type="ECO:0000255" key="1">
    <source>
        <dbReference type="HAMAP-Rule" id="MF_00437"/>
    </source>
</evidence>
<name>YCF4_LEMMI</name>
<feature type="chain" id="PRO_0000326013" description="Photosystem I assembly protein Ycf4">
    <location>
        <begin position="1"/>
        <end position="184"/>
    </location>
</feature>
<feature type="transmembrane region" description="Helical" evidence="1">
    <location>
        <begin position="22"/>
        <end position="42"/>
    </location>
</feature>
<feature type="transmembrane region" description="Helical" evidence="1">
    <location>
        <begin position="57"/>
        <end position="77"/>
    </location>
</feature>
<organism>
    <name type="scientific">Lemna minor</name>
    <name type="common">Common duckweed</name>
    <dbReference type="NCBI Taxonomy" id="4472"/>
    <lineage>
        <taxon>Eukaryota</taxon>
        <taxon>Viridiplantae</taxon>
        <taxon>Streptophyta</taxon>
        <taxon>Embryophyta</taxon>
        <taxon>Tracheophyta</taxon>
        <taxon>Spermatophyta</taxon>
        <taxon>Magnoliopsida</taxon>
        <taxon>Liliopsida</taxon>
        <taxon>Araceae</taxon>
        <taxon>Lemnoideae</taxon>
        <taxon>Lemna</taxon>
    </lineage>
</organism>